<evidence type="ECO:0000255" key="1">
    <source>
        <dbReference type="HAMAP-Rule" id="MF_04061"/>
    </source>
</evidence>
<evidence type="ECO:0000256" key="2">
    <source>
        <dbReference type="SAM" id="MobiDB-lite"/>
    </source>
</evidence>
<feature type="chain" id="PRO_0000221902" description="Preterminal protein" evidence="1">
    <location>
        <begin position="1"/>
        <end position="575"/>
    </location>
</feature>
<feature type="chain" id="PRO_0000433948" description="Intermediate terminal protein" evidence="1">
    <location>
        <begin position="117"/>
        <end position="575"/>
    </location>
</feature>
<feature type="chain" id="PRO_0000433949" description="Terminal protein" evidence="1">
    <location>
        <begin position="266"/>
        <end position="575"/>
    </location>
</feature>
<feature type="region of interest" description="Disordered" evidence="2">
    <location>
        <begin position="314"/>
        <end position="340"/>
    </location>
</feature>
<feature type="short sequence motif" description="Nuclear localization signal" evidence="1">
    <location>
        <begin position="309"/>
        <end position="318"/>
    </location>
</feature>
<feature type="compositionally biased region" description="Acidic residues" evidence="2">
    <location>
        <begin position="328"/>
        <end position="340"/>
    </location>
</feature>
<feature type="site" description="Cleavage; by adenovirus protease" evidence="1">
    <location>
        <begin position="116"/>
        <end position="117"/>
    </location>
</feature>
<feature type="site" description="Cleavage; by adenovirus protease" evidence="1">
    <location>
        <begin position="265"/>
        <end position="266"/>
    </location>
</feature>
<feature type="site" description="Priming of strand displacement replication by covalently linking the first nucleotide of the new DNA chain" evidence="1">
    <location>
        <position position="510"/>
    </location>
</feature>
<feature type="modified residue" description="O-(5'-phospho-DNA)-serine" evidence="1">
    <location>
        <position position="510"/>
    </location>
</feature>
<reference key="1">
    <citation type="journal article" date="1996" name="J. Virol.">
        <title>The complete DNA sequence and genomic organization of the avian adenovirus CELO.</title>
        <authorList>
            <person name="Chiocca S."/>
            <person name="Kurzbauer R."/>
            <person name="Schaffner G."/>
            <person name="Baker A."/>
            <person name="Mautner V."/>
            <person name="Cotten M."/>
        </authorList>
    </citation>
    <scope>NUCLEOTIDE SEQUENCE [LARGE SCALE GENOMIC DNA]</scope>
</reference>
<accession>Q64752</accession>
<dbReference type="EMBL" id="U46933">
    <property type="protein sequence ID" value="AAC54905.1"/>
    <property type="molecule type" value="Genomic_DNA"/>
</dbReference>
<dbReference type="RefSeq" id="NP_043879.1">
    <property type="nucleotide sequence ID" value="NC_001720.1"/>
</dbReference>
<dbReference type="KEGG" id="vg:1733465"/>
<dbReference type="Proteomes" id="UP000001594">
    <property type="component" value="Segment"/>
</dbReference>
<dbReference type="GO" id="GO:0044204">
    <property type="term" value="C:host cell nuclear matrix"/>
    <property type="evidence" value="ECO:0007669"/>
    <property type="project" value="UniProtKB-SubCell"/>
</dbReference>
<dbReference type="GO" id="GO:0003690">
    <property type="term" value="F:double-stranded DNA binding"/>
    <property type="evidence" value="ECO:0007669"/>
    <property type="project" value="UniProtKB-UniRule"/>
</dbReference>
<dbReference type="GO" id="GO:0003697">
    <property type="term" value="F:single-stranded DNA binding"/>
    <property type="evidence" value="ECO:0007669"/>
    <property type="project" value="UniProtKB-UniRule"/>
</dbReference>
<dbReference type="GO" id="GO:0006260">
    <property type="term" value="P:DNA replication"/>
    <property type="evidence" value="ECO:0007669"/>
    <property type="project" value="UniProtKB-KW"/>
</dbReference>
<dbReference type="GO" id="GO:0039687">
    <property type="term" value="P:viral DNA strand displacement replication"/>
    <property type="evidence" value="ECO:0007669"/>
    <property type="project" value="UniProtKB-UniRule"/>
</dbReference>
<dbReference type="HAMAP" id="MF_04061">
    <property type="entry name" value="ADV_TERM"/>
    <property type="match status" value="1"/>
</dbReference>
<dbReference type="InterPro" id="IPR003391">
    <property type="entry name" value="Adeno_preterminal"/>
</dbReference>
<dbReference type="Pfam" id="PF02459">
    <property type="entry name" value="Adeno_terminal"/>
    <property type="match status" value="1"/>
</dbReference>
<protein>
    <recommendedName>
        <fullName evidence="1">Preterminal protein</fullName>
        <shortName evidence="1">pTP</shortName>
    </recommendedName>
    <alternativeName>
        <fullName evidence="1">Bellett protein</fullName>
    </alternativeName>
    <alternativeName>
        <fullName evidence="1">Precursor terminal protein</fullName>
    </alternativeName>
    <component>
        <recommendedName>
            <fullName evidence="1">Intermediate terminal protein</fullName>
            <shortName evidence="1">iTP</shortName>
        </recommendedName>
    </component>
    <component>
        <recommendedName>
            <fullName evidence="1">Terminal protein</fullName>
            <shortName evidence="1">TP</shortName>
        </recommendedName>
    </component>
</protein>
<organism>
    <name type="scientific">Fowl adenovirus A serotype 1 (strain CELO / Phelps)</name>
    <name type="common">FAdV-1</name>
    <name type="synonym">Avian adenovirus gal1 (strain Phelps)</name>
    <dbReference type="NCBI Taxonomy" id="10553"/>
    <lineage>
        <taxon>Viruses</taxon>
        <taxon>Varidnaviria</taxon>
        <taxon>Bamfordvirae</taxon>
        <taxon>Preplasmiviricota</taxon>
        <taxon>Tectiliviricetes</taxon>
        <taxon>Rowavirales</taxon>
        <taxon>Adenoviridae</taxon>
        <taxon>Aviadenovirus</taxon>
        <taxon>Fowl aviadenovirus A</taxon>
    </lineage>
</organism>
<organismHost>
    <name type="scientific">Galliformes</name>
    <dbReference type="NCBI Taxonomy" id="8976"/>
</organismHost>
<keyword id="KW-0190">Covalent protein-DNA linkage</keyword>
<keyword id="KW-0235">DNA replication</keyword>
<keyword id="KW-0238">DNA-binding</keyword>
<keyword id="KW-1048">Host nucleus</keyword>
<keyword id="KW-0597">Phosphoprotein</keyword>
<keyword id="KW-1185">Reference proteome</keyword>
<keyword id="KW-1194">Viral DNA replication</keyword>
<gene>
    <name evidence="1" type="primary">PTP</name>
</gene>
<proteinExistence type="inferred from homology"/>
<sequence>MQLRDLAPRSPNVAAPPYNGLPPPHLLLGYQAMHRALNDYLFDNRVFMQIGYDSPPQRPRRLFWTCLTDCSYAVNVGQYMRFLDLDNFHGTFTQMHNAVLMDRVAADMGRAHLRGRGIDVGRHGQVLPQLDAEHHSLLSGNGAGGLQEGVLMRTASAADAELLAAIRQLRVALCHYLFCYAYDLFQTEERYRFLPGSDVFLEPNWLSYFAEAFAELDTQQLVRDAERKFRGRRDVEEPTETMARCFMSTLASDAVSLAGTGLSGGAITLCSRRVTDRTGLRPRDRHGRAITASEARRIRPRAVRAFVDRLPRVTRRRRRPPSPAPPPEEIEEAAMEVEEPEEEEEELLDEVIRTALEAIGALQDELSGAARRHELFRFANDFYRMLLTARDAGLMGESFLRKWVLYFFLAEHIASTLYYLYSHFIANREFRRYVDVLTLQVLVVGWDVNAQQVFKRIWSEQSNPATIFETLWERILRDFLMMVERTGQFEGMDDADQQLFLSDIQYRDRSGDIEEVLKQLNLSEELIDSIDISFRIKFKGIVAIATNEEIKANLRRVLRHRREDIEAAARRGQPL</sequence>
<comment type="function">
    <text evidence="1">Protein covalently bound to the viral DNA that acts as a primer for viral genomic replication by DNA strand displacement. Assembles on the viral origin of replication in an initiation complex with viral polymerase, DBP, host NFIA and host POU2F1/OCT1. During initiation, the polymerase covalently couples the first dCTP with Ser-580 of pTP. The terminal protein stimulates the template activity over 20 fold compared to protein-free templates. Neo-synthesized viral genomes are linked to two preterminal proteins, one for each 5' end. These new genomes are encapsidated in the nucleus, and during capsid maturation by viral protease, preterminal protein is first cleaved into intermediary (iTP), then into mature TP. May play a role in host nuclear matrix localization of genomic DNA.</text>
</comment>
<comment type="subunit">
    <text evidence="1">Heterodimer with the polymerase; this heterodimer binds to bp 9 to 18 of the genome. Interacts with host POU2F1; POU2F1 binds to the auxiliary sequences in the inverted terminal repeats and tethers the pTP-POL heterodimer to the origin DNA thereby participating in the assembly of the pre-initiation complex (POL-TP-DBP-NFIA-POU2F1).</text>
</comment>
<comment type="subcellular location">
    <subcellularLocation>
        <location evidence="1">Host nucleus matrix</location>
    </subcellularLocation>
</comment>
<comment type="PTM">
    <text evidence="1">Preterminal protein is used to replicate viral genome, upon genomic encapsidation it is processed first into iTP and finally into TP by adenovirus protease.</text>
</comment>
<comment type="similarity">
    <text evidence="1">Belongs to the adenoviridae terminal protein family.</text>
</comment>
<name>TERM_ADEG1</name>